<reference key="1">
    <citation type="journal article" date="2005" name="Proc. Natl. Acad. Sci. U.S.A.">
        <title>Complete genome sequence of Vibrio fischeri: a symbiotic bacterium with pathogenic congeners.</title>
        <authorList>
            <person name="Ruby E.G."/>
            <person name="Urbanowski M."/>
            <person name="Campbell J."/>
            <person name="Dunn A."/>
            <person name="Faini M."/>
            <person name="Gunsalus R."/>
            <person name="Lostroh P."/>
            <person name="Lupp C."/>
            <person name="McCann J."/>
            <person name="Millikan D."/>
            <person name="Schaefer A."/>
            <person name="Stabb E."/>
            <person name="Stevens A."/>
            <person name="Visick K."/>
            <person name="Whistler C."/>
            <person name="Greenberg E.P."/>
        </authorList>
    </citation>
    <scope>NUCLEOTIDE SEQUENCE [LARGE SCALE GENOMIC DNA]</scope>
    <source>
        <strain>ATCC 700601 / ES114</strain>
    </source>
</reference>
<proteinExistence type="inferred from homology"/>
<gene>
    <name evidence="1" type="primary">xni</name>
    <name evidence="1" type="synonym">ygdG</name>
    <name type="ordered locus">VF_0594</name>
</gene>
<feature type="chain" id="PRO_0000297888" description="Flap endonuclease Xni">
    <location>
        <begin position="1"/>
        <end position="259"/>
    </location>
</feature>
<feature type="domain" description="5'-3' exonuclease" evidence="1">
    <location>
        <begin position="165"/>
        <end position="255"/>
    </location>
</feature>
<feature type="region of interest" description="Interaction with DNA" evidence="1">
    <location>
        <begin position="189"/>
        <end position="194"/>
    </location>
</feature>
<feature type="binding site" evidence="1">
    <location>
        <position position="109"/>
    </location>
    <ligand>
        <name>Mg(2+)</name>
        <dbReference type="ChEBI" id="CHEBI:18420"/>
    </ligand>
</feature>
<feature type="binding site" evidence="1">
    <location>
        <position position="176"/>
    </location>
    <ligand>
        <name>K(+)</name>
        <dbReference type="ChEBI" id="CHEBI:29103"/>
    </ligand>
</feature>
<feature type="binding site" evidence="1">
    <location>
        <position position="177"/>
    </location>
    <ligand>
        <name>K(+)</name>
        <dbReference type="ChEBI" id="CHEBI:29103"/>
    </ligand>
</feature>
<feature type="binding site" evidence="1">
    <location>
        <position position="187"/>
    </location>
    <ligand>
        <name>K(+)</name>
        <dbReference type="ChEBI" id="CHEBI:29103"/>
    </ligand>
</feature>
<feature type="binding site" evidence="1">
    <location>
        <position position="190"/>
    </location>
    <ligand>
        <name>K(+)</name>
        <dbReference type="ChEBI" id="CHEBI:29103"/>
    </ligand>
</feature>
<name>XNI_ALIF1</name>
<comment type="function">
    <text evidence="1">Has flap endonuclease activity. During DNA replication, flap endonucleases cleave the 5'-overhanging flap structure that is generated by displacement synthesis when DNA polymerase encounters the 5'-end of a downstream Okazaki fragment.</text>
</comment>
<comment type="cofactor">
    <cofactor evidence="1">
        <name>Mg(2+)</name>
        <dbReference type="ChEBI" id="CHEBI:18420"/>
    </cofactor>
    <text evidence="1">Binds 2 Mg(2+) per subunit. Only one magnesium ion has a direct interaction with the protein, the other interactions are indirect.</text>
</comment>
<comment type="cofactor">
    <cofactor evidence="1">
        <name>K(+)</name>
        <dbReference type="ChEBI" id="CHEBI:29103"/>
    </cofactor>
    <text evidence="1">Binds 1 K(+) per subunit. The potassium ion strongly increases the affinity for DNA.</text>
</comment>
<comment type="similarity">
    <text evidence="1">Belongs to the Xni family.</text>
</comment>
<dbReference type="EC" id="3.1.-.-" evidence="1"/>
<dbReference type="EMBL" id="CP000020">
    <property type="protein sequence ID" value="AAW85089.1"/>
    <property type="molecule type" value="Genomic_DNA"/>
</dbReference>
<dbReference type="RefSeq" id="WP_011261344.1">
    <property type="nucleotide sequence ID" value="NC_006840.2"/>
</dbReference>
<dbReference type="RefSeq" id="YP_203977.1">
    <property type="nucleotide sequence ID" value="NC_006840.2"/>
</dbReference>
<dbReference type="SMR" id="Q5E7A7"/>
<dbReference type="STRING" id="312309.VF_0594"/>
<dbReference type="EnsemblBacteria" id="AAW85089">
    <property type="protein sequence ID" value="AAW85089"/>
    <property type="gene ID" value="VF_0594"/>
</dbReference>
<dbReference type="GeneID" id="54163247"/>
<dbReference type="KEGG" id="vfi:VF_0594"/>
<dbReference type="PATRIC" id="fig|312309.11.peg.586"/>
<dbReference type="eggNOG" id="COG0258">
    <property type="taxonomic scope" value="Bacteria"/>
</dbReference>
<dbReference type="HOGENOM" id="CLU_004675_1_2_6"/>
<dbReference type="OrthoDB" id="8070997at2"/>
<dbReference type="Proteomes" id="UP000000537">
    <property type="component" value="Chromosome I"/>
</dbReference>
<dbReference type="GO" id="GO:0008409">
    <property type="term" value="F:5'-3' exonuclease activity"/>
    <property type="evidence" value="ECO:0007669"/>
    <property type="project" value="InterPro"/>
</dbReference>
<dbReference type="GO" id="GO:0017108">
    <property type="term" value="F:5'-flap endonuclease activity"/>
    <property type="evidence" value="ECO:0007669"/>
    <property type="project" value="UniProtKB-UniRule"/>
</dbReference>
<dbReference type="GO" id="GO:0003677">
    <property type="term" value="F:DNA binding"/>
    <property type="evidence" value="ECO:0007669"/>
    <property type="project" value="UniProtKB-UniRule"/>
</dbReference>
<dbReference type="GO" id="GO:0000287">
    <property type="term" value="F:magnesium ion binding"/>
    <property type="evidence" value="ECO:0007669"/>
    <property type="project" value="UniProtKB-UniRule"/>
</dbReference>
<dbReference type="GO" id="GO:0030955">
    <property type="term" value="F:potassium ion binding"/>
    <property type="evidence" value="ECO:0007669"/>
    <property type="project" value="UniProtKB-UniRule"/>
</dbReference>
<dbReference type="GO" id="GO:0033567">
    <property type="term" value="P:DNA replication, Okazaki fragment processing"/>
    <property type="evidence" value="ECO:0007669"/>
    <property type="project" value="UniProtKB-UniRule"/>
</dbReference>
<dbReference type="CDD" id="cd09898">
    <property type="entry name" value="H3TH_53EXO"/>
    <property type="match status" value="1"/>
</dbReference>
<dbReference type="CDD" id="cd09859">
    <property type="entry name" value="PIN_53EXO"/>
    <property type="match status" value="1"/>
</dbReference>
<dbReference type="FunFam" id="1.10.150.20:FF:000003">
    <property type="entry name" value="DNA polymerase I"/>
    <property type="match status" value="1"/>
</dbReference>
<dbReference type="Gene3D" id="1.10.150.20">
    <property type="entry name" value="5' to 3' exonuclease, C-terminal subdomain"/>
    <property type="match status" value="1"/>
</dbReference>
<dbReference type="Gene3D" id="3.40.50.1010">
    <property type="entry name" value="5'-nuclease"/>
    <property type="match status" value="1"/>
</dbReference>
<dbReference type="HAMAP" id="MF_01192">
    <property type="entry name" value="Xni"/>
    <property type="match status" value="1"/>
</dbReference>
<dbReference type="InterPro" id="IPR020046">
    <property type="entry name" value="5-3_exonucl_a-hlix_arch_N"/>
</dbReference>
<dbReference type="InterPro" id="IPR002421">
    <property type="entry name" value="5-3_exonuclease"/>
</dbReference>
<dbReference type="InterPro" id="IPR036279">
    <property type="entry name" value="5-3_exonuclease_C_sf"/>
</dbReference>
<dbReference type="InterPro" id="IPR020045">
    <property type="entry name" value="DNA_polI_H3TH"/>
</dbReference>
<dbReference type="InterPro" id="IPR038969">
    <property type="entry name" value="FEN"/>
</dbReference>
<dbReference type="InterPro" id="IPR008918">
    <property type="entry name" value="HhH2"/>
</dbReference>
<dbReference type="InterPro" id="IPR029060">
    <property type="entry name" value="PIN-like_dom_sf"/>
</dbReference>
<dbReference type="InterPro" id="IPR022895">
    <property type="entry name" value="Xni"/>
</dbReference>
<dbReference type="NCBIfam" id="NF007017">
    <property type="entry name" value="PRK09482.1"/>
    <property type="match status" value="1"/>
</dbReference>
<dbReference type="PANTHER" id="PTHR42646:SF2">
    <property type="entry name" value="5'-3' EXONUCLEASE FAMILY PROTEIN"/>
    <property type="match status" value="1"/>
</dbReference>
<dbReference type="PANTHER" id="PTHR42646">
    <property type="entry name" value="FLAP ENDONUCLEASE XNI"/>
    <property type="match status" value="1"/>
</dbReference>
<dbReference type="Pfam" id="PF01367">
    <property type="entry name" value="5_3_exonuc"/>
    <property type="match status" value="1"/>
</dbReference>
<dbReference type="Pfam" id="PF02739">
    <property type="entry name" value="5_3_exonuc_N"/>
    <property type="match status" value="1"/>
</dbReference>
<dbReference type="SMART" id="SM00475">
    <property type="entry name" value="53EXOc"/>
    <property type="match status" value="1"/>
</dbReference>
<dbReference type="SMART" id="SM00279">
    <property type="entry name" value="HhH2"/>
    <property type="match status" value="1"/>
</dbReference>
<dbReference type="SUPFAM" id="SSF47807">
    <property type="entry name" value="5' to 3' exonuclease, C-terminal subdomain"/>
    <property type="match status" value="1"/>
</dbReference>
<dbReference type="SUPFAM" id="SSF88723">
    <property type="entry name" value="PIN domain-like"/>
    <property type="match status" value="1"/>
</dbReference>
<evidence type="ECO:0000255" key="1">
    <source>
        <dbReference type="HAMAP-Rule" id="MF_01192"/>
    </source>
</evidence>
<keyword id="KW-0238">DNA-binding</keyword>
<keyword id="KW-0255">Endonuclease</keyword>
<keyword id="KW-0378">Hydrolase</keyword>
<keyword id="KW-0460">Magnesium</keyword>
<keyword id="KW-0479">Metal-binding</keyword>
<keyword id="KW-0540">Nuclease</keyword>
<keyword id="KW-0630">Potassium</keyword>
<keyword id="KW-1185">Reference proteome</keyword>
<accession>Q5E7A7</accession>
<organism>
    <name type="scientific">Aliivibrio fischeri (strain ATCC 700601 / ES114)</name>
    <name type="common">Vibrio fischeri</name>
    <dbReference type="NCBI Taxonomy" id="312309"/>
    <lineage>
        <taxon>Bacteria</taxon>
        <taxon>Pseudomonadati</taxon>
        <taxon>Pseudomonadota</taxon>
        <taxon>Gammaproteobacteria</taxon>
        <taxon>Vibrionales</taxon>
        <taxon>Vibrionaceae</taxon>
        <taxon>Aliivibrio</taxon>
    </lineage>
</organism>
<protein>
    <recommendedName>
        <fullName evidence="1">Flap endonuclease Xni</fullName>
        <shortName evidence="1">FEN</shortName>
        <ecNumber evidence="1">3.1.-.-</ecNumber>
    </recommendedName>
</protein>
<sequence>MAIHLVIIDALNLIRRVHSAQPNQDDIQAVITTTTRTINKILKETEPTHIIAVFDHHLQDRGWRAEILPQYKEDRKPMPEALQKGMDDIQEAWWKLGIDSLLSDGDEADDLVATLANKVAMHNEQVTIISTDKGYCQLLSPTLRIRDYFQHRWLDAPFVEKEFGLKPEQLADYWGLAGISSSKITGIPGVGPKAALEILTQFPTIEAANESEDLPKKYRKKFDEHYETAILCRQVAGLRTDIELGFNLQDIRYEKGTRD</sequence>